<accession>M1W5Z7</accession>
<accession>G8GV66</accession>
<dbReference type="EC" id="2.1.1.261" evidence="1"/>
<dbReference type="EMBL" id="JN186799">
    <property type="protein sequence ID" value="AET79190.1"/>
    <property type="molecule type" value="Genomic_DNA"/>
</dbReference>
<dbReference type="EMBL" id="CAGA01000020">
    <property type="protein sequence ID" value="CCE30230.1"/>
    <property type="molecule type" value="Genomic_DNA"/>
</dbReference>
<dbReference type="SMR" id="M1W5Z7"/>
<dbReference type="STRING" id="1111077.M1W5Z7"/>
<dbReference type="VEuPathDB" id="FungiDB:CPUR_04078"/>
<dbReference type="eggNOG" id="ENOG502QS9T">
    <property type="taxonomic scope" value="Eukaryota"/>
</dbReference>
<dbReference type="HOGENOM" id="CLU_049766_0_2_1"/>
<dbReference type="OrthoDB" id="659at2759"/>
<dbReference type="BioCyc" id="MetaCyc:MONOMER-17450"/>
<dbReference type="UniPathway" id="UPA00327"/>
<dbReference type="Proteomes" id="UP000016801">
    <property type="component" value="Unassembled WGS sequence"/>
</dbReference>
<dbReference type="GO" id="GO:0008168">
    <property type="term" value="F:methyltransferase activity"/>
    <property type="evidence" value="ECO:0007669"/>
    <property type="project" value="UniProtKB-KW"/>
</dbReference>
<dbReference type="GO" id="GO:0035835">
    <property type="term" value="P:indole alkaloid biosynthetic process"/>
    <property type="evidence" value="ECO:0007669"/>
    <property type="project" value="UniProtKB-UniPathway"/>
</dbReference>
<dbReference type="GO" id="GO:0032259">
    <property type="term" value="P:methylation"/>
    <property type="evidence" value="ECO:0007669"/>
    <property type="project" value="UniProtKB-KW"/>
</dbReference>
<dbReference type="Gene3D" id="3.40.50.150">
    <property type="entry name" value="Vaccinia Virus protein VP39"/>
    <property type="match status" value="1"/>
</dbReference>
<dbReference type="InterPro" id="IPR051128">
    <property type="entry name" value="EgtD_Methyltrsf_superfamily"/>
</dbReference>
<dbReference type="InterPro" id="IPR019257">
    <property type="entry name" value="MeTrfase_dom"/>
</dbReference>
<dbReference type="InterPro" id="IPR017804">
    <property type="entry name" value="MeTrfase_EgtD-like"/>
</dbReference>
<dbReference type="InterPro" id="IPR029063">
    <property type="entry name" value="SAM-dependent_MTases_sf"/>
</dbReference>
<dbReference type="InterPro" id="IPR017805">
    <property type="entry name" value="SAM_MeTrfase_EasF-type_put"/>
</dbReference>
<dbReference type="NCBIfam" id="TIGR03439">
    <property type="entry name" value="methyl_EasF"/>
    <property type="match status" value="1"/>
</dbReference>
<dbReference type="PANTHER" id="PTHR43397">
    <property type="entry name" value="ERGOTHIONEINE BIOSYNTHESIS PROTEIN 1"/>
    <property type="match status" value="1"/>
</dbReference>
<dbReference type="PANTHER" id="PTHR43397:SF1">
    <property type="entry name" value="ERGOTHIONEINE BIOSYNTHESIS PROTEIN 1"/>
    <property type="match status" value="1"/>
</dbReference>
<dbReference type="Pfam" id="PF10017">
    <property type="entry name" value="Methyltransf_33"/>
    <property type="match status" value="1"/>
</dbReference>
<dbReference type="PIRSF" id="PIRSF018005">
    <property type="entry name" value="UCP018005"/>
    <property type="match status" value="1"/>
</dbReference>
<organism>
    <name type="scientific">Claviceps purpurea (strain 20.1)</name>
    <name type="common">Ergot fungus</name>
    <name type="synonym">Sphacelia segetum</name>
    <dbReference type="NCBI Taxonomy" id="1111077"/>
    <lineage>
        <taxon>Eukaryota</taxon>
        <taxon>Fungi</taxon>
        <taxon>Dikarya</taxon>
        <taxon>Ascomycota</taxon>
        <taxon>Pezizomycotina</taxon>
        <taxon>Sordariomycetes</taxon>
        <taxon>Hypocreomycetidae</taxon>
        <taxon>Hypocreales</taxon>
        <taxon>Clavicipitaceae</taxon>
        <taxon>Claviceps</taxon>
    </lineage>
</organism>
<protein>
    <recommendedName>
        <fullName evidence="1">4-dimethylallyltryptophan N-methyltransferase easF</fullName>
        <ecNumber evidence="1">2.1.1.261</ecNumber>
    </recommendedName>
    <alternativeName>
        <fullName evidence="1">4-dimethylallyltryptophan methyltransferase</fullName>
    </alternativeName>
    <alternativeName>
        <fullName evidence="16">Ergot alkaloid synthesis protein F</fullName>
    </alternativeName>
</protein>
<comment type="function">
    <text evidence="2 3 4 5 6 7 8 9 10 11 12 13 14 19 20">4-dimethylallyltryptophan N-methyltransferase; part of the gene cluster that mediates the biosynthesis of fungal ergot alkaloid (PubMed:10071219, PubMed:14700635, PubMed:14732265, PubMed:15904941, PubMed:17308187, PubMed:17720822). DmaW catalyzes the first step of ergot alkaloid biosynthesis by condensing dimethylallyl diphosphate (DMAP) and tryptophan to form 4-dimethylallyl-L-tryptophan (PubMed:14732265). The second step is catalyzed by the methyltransferase easF that methylates 4-dimethylallyl-L-tryptophan in the presence of S-adenosyl-L-methionine, resulting in the formation of 4-dimethylallyl-L-abrine (By similarity). The catalase easC and the FAD-dependent oxidoreductase easE then transform 4-dimethylallyl-L-abrine to chanoclavine-I which is further oxidized by easD in the presence of NAD(+), resulting in the formation of chanoclavine-I aldehyde (PubMed:20118373, PubMed:21409592). Agroclavine dehydrogenase easG then mediates the conversion of chanoclavine-I aldehyde to agroclavine via a non-enzymatic adduct reaction: the substrate is an iminium intermediate that is formed spontaneously from chanoclavine-I aldehyde in the presence of glutathione (PubMed:20735127, PubMed:21494745). The presence of easA is not required to complete this reaction (PubMed:21494745). Further conversion of agroclavine to paspalic acid is a two-step process involving oxidation of agroclavine to elymoclavine and of elymoclavine to paspalic acid, the second step being performed by the elymoclavine oxidase cloA (PubMed:16538694, PubMed:17720822). Paspalic acid is then further converted to D-lysergic acid (PubMed:15904941). Ergopeptines are assembled from D-lysergic acid and three different amino acids by the D-lysergyl-peptide-synthetases composed each of a monomudular and a trimodular nonribosomal peptide synthetase subunit (PubMed:14700635, PubMed:15904941). LpsB and lpsC encode the monomodular subunits responsible for D-lysergic acid activation and incorporation into the ergopeptine backbone (PubMed:14700635). LpsA1 and A2 subunits encode the trimodular nonribosomal peptide synthetase assembling the tripeptide portion of ergopeptines (PubMed:14700635). LpsA1 is responsible for formation of the major ergopeptine, ergotamine, and lpsA2 for alpha-ergocryptine, the minor ergopeptine of the total alkaloid mixture elaborated by C.purpurea (PubMed:17560817, PubMed:19139103). D-lysergyl-tripeptides are assembled by the nonribosomal peptide synthetases and released as N-(D-lysergyl-aminoacyl)-lactams (PubMed:24361048). Cyclolization of the D-lysergyl-tripeptides is performed by the Fe(2+)/2-ketoglutarate-dependent dioxygenase easH which introduces a hydroxyl group into N-(D-lysergyl-aminoacyl)-lactam at alpha-C of the aminoacyl residue followed by spontaneous condensation with the terminal lactam carbonyl group (PubMed:24361048).</text>
</comment>
<comment type="catalytic activity">
    <reaction evidence="1">
        <text>4-(3-methylbut-2-enyl)-L-tryptophan + S-adenosyl-L-methionine = 4-(3-methylbut-2-enyl)-L-abrine + S-adenosyl-L-homocysteine + H(+)</text>
        <dbReference type="Rhea" id="RHEA:34435"/>
        <dbReference type="ChEBI" id="CHEBI:15378"/>
        <dbReference type="ChEBI" id="CHEBI:57856"/>
        <dbReference type="ChEBI" id="CHEBI:58209"/>
        <dbReference type="ChEBI" id="CHEBI:59789"/>
        <dbReference type="ChEBI" id="CHEBI:67248"/>
        <dbReference type="EC" id="2.1.1.261"/>
    </reaction>
</comment>
<comment type="pathway">
    <text evidence="18">Alkaloid biosynthesis; ergot alkaloid biosynthesis.</text>
</comment>
<comment type="subunit">
    <text evidence="1">Homodimer.</text>
</comment>
<comment type="similarity">
    <text evidence="17">Belongs to the methyltransferase superfamily.</text>
</comment>
<gene>
    <name evidence="16" type="primary">easF</name>
    <name evidence="15" type="synonym">orfB</name>
    <name type="ORF">CPUR_04078</name>
</gene>
<name>EASF_CLAP2</name>
<sequence length="344" mass="38540">MPALPVIDIRSNHVEDSLPEQIIKGLTSQPKTLPPLLFYSNEGLEHWNHHSRQPDFYPRRQEIEILKQGGNDIARSIAPSSVILDLGSANLEKVGYLLEALEAQEKDVLYFALDISAPQLATTLKEIPSSNFRHVRFAGLHGTFEDGLRWINETPEIRDLPHCVLLLGLTIGNFSRQNAAAFLQNIANHALTGASKNKSSILLSLDSCKVPTKVTRAYTSDGVVPFALQALTYAKALLCDRIDNGIDEKVLSCNLRPEHWHYLSEWNFALGRHEASLIPRFGDVCLGSMLQDIIVKKEEKVRFACSYKYDAKERQKLFLDSGVDQGMVWTNEGCDVAIYELKLA</sequence>
<proteinExistence type="inferred from homology"/>
<evidence type="ECO:0000250" key="1">
    <source>
        <dbReference type="UniProtKB" id="B6D5I7"/>
    </source>
</evidence>
<evidence type="ECO:0000250" key="2">
    <source>
        <dbReference type="UniProtKB" id="Q50EL0"/>
    </source>
</evidence>
<evidence type="ECO:0000269" key="3">
    <source>
    </source>
</evidence>
<evidence type="ECO:0000269" key="4">
    <source>
    </source>
</evidence>
<evidence type="ECO:0000269" key="5">
    <source>
    </source>
</evidence>
<evidence type="ECO:0000269" key="6">
    <source>
    </source>
</evidence>
<evidence type="ECO:0000269" key="7">
    <source>
    </source>
</evidence>
<evidence type="ECO:0000269" key="8">
    <source>
    </source>
</evidence>
<evidence type="ECO:0000269" key="9">
    <source>
    </source>
</evidence>
<evidence type="ECO:0000269" key="10">
    <source>
    </source>
</evidence>
<evidence type="ECO:0000269" key="11">
    <source>
    </source>
</evidence>
<evidence type="ECO:0000269" key="12">
    <source>
    </source>
</evidence>
<evidence type="ECO:0000269" key="13">
    <source>
    </source>
</evidence>
<evidence type="ECO:0000269" key="14">
    <source>
    </source>
</evidence>
<evidence type="ECO:0000303" key="15">
    <source>
    </source>
</evidence>
<evidence type="ECO:0000303" key="16">
    <source>
    </source>
</evidence>
<evidence type="ECO:0000305" key="17"/>
<evidence type="ECO:0000305" key="18">
    <source>
    </source>
</evidence>
<evidence type="ECO:0000305" key="19">
    <source>
    </source>
</evidence>
<evidence type="ECO:0000305" key="20">
    <source>
    </source>
</evidence>
<feature type="chain" id="PRO_0000439137" description="4-dimethylallyltryptophan N-methyltransferase easF">
    <location>
        <begin position="1"/>
        <end position="344"/>
    </location>
</feature>
<keyword id="KW-0017">Alkaloid metabolism</keyword>
<keyword id="KW-0489">Methyltransferase</keyword>
<keyword id="KW-1185">Reference proteome</keyword>
<keyword id="KW-0949">S-adenosyl-L-methionine</keyword>
<keyword id="KW-0808">Transferase</keyword>
<reference key="1">
    <citation type="submission" date="2011-06" db="EMBL/GenBank/DDBJ databases">
        <authorList>
            <person name="Florea S."/>
            <person name="Oeser B."/>
            <person name="Tudzynski P."/>
            <person name="Schardl C.L."/>
        </authorList>
    </citation>
    <scope>NUCLEOTIDE SEQUENCE [GENOMIC DNA]</scope>
    <source>
        <strain>20.1</strain>
    </source>
</reference>
<reference key="2">
    <citation type="journal article" date="2013" name="PLoS Genet.">
        <title>Plant-symbiotic fungi as chemical engineers: Multi-genome analysis of the Clavicipitaceae reveals dynamics of alkaloid loci.</title>
        <authorList>
            <person name="Schardl C.L."/>
            <person name="Young C.A."/>
            <person name="Hesse U."/>
            <person name="Amyotte S.G."/>
            <person name="Andreeva K."/>
            <person name="Calie P.J."/>
            <person name="Fleetwood D.J."/>
            <person name="Haws D.C."/>
            <person name="Moore N."/>
            <person name="Oeser B."/>
            <person name="Panaccione D.G."/>
            <person name="Schweri K.K."/>
            <person name="Voisey C.R."/>
            <person name="Farman M.L."/>
            <person name="Jaromczyk J.W."/>
            <person name="Roe B.A."/>
            <person name="O'Sullivan D.M."/>
            <person name="Scott B."/>
            <person name="Tudzynski P."/>
            <person name="An Z."/>
            <person name="Arnaoudova E.G."/>
            <person name="Bullock C.T."/>
            <person name="Charlton N.D."/>
            <person name="Chen L."/>
            <person name="Cox M."/>
            <person name="Dinkins R.D."/>
            <person name="Florea S."/>
            <person name="Glenn A.E."/>
            <person name="Gordon A."/>
            <person name="Gueldener U."/>
            <person name="Harris D.R."/>
            <person name="Hollin W."/>
            <person name="Jaromczyk J."/>
            <person name="Johnson R.D."/>
            <person name="Khan A.K."/>
            <person name="Leistner E."/>
            <person name="Leuchtmann A."/>
            <person name="Li C."/>
            <person name="Liu J."/>
            <person name="Liu J."/>
            <person name="Liu M."/>
            <person name="Mace W."/>
            <person name="Machado C."/>
            <person name="Nagabhyru P."/>
            <person name="Pan J."/>
            <person name="Schmid J."/>
            <person name="Sugawara K."/>
            <person name="Steiner U."/>
            <person name="Takach J.E."/>
            <person name="Tanaka E."/>
            <person name="Webb J.S."/>
            <person name="Wilson E.V."/>
            <person name="Wiseman J.L."/>
            <person name="Yoshida R."/>
            <person name="Zeng Z."/>
        </authorList>
    </citation>
    <scope>NUCLEOTIDE SEQUENCE [LARGE SCALE GENOMIC DNA]</scope>
    <source>
        <strain>20.1</strain>
    </source>
</reference>
<reference key="3">
    <citation type="journal article" date="1999" name="Mol. Gen. Genet.">
        <title>Evidence for an ergot alkaloid gene cluster in Claviceps purpurea.</title>
        <authorList>
            <person name="Tudzynski P."/>
            <person name="Hoelter K."/>
            <person name="Correia T.H."/>
            <person name="Arntz C."/>
            <person name="Grammel N."/>
            <person name="Keller U."/>
        </authorList>
    </citation>
    <scope>FUNCTION</scope>
    <scope>IDENTIFICATION IN THE EAS CLUSTER</scope>
    <source>
        <strain>P1 / 1029/N5</strain>
    </source>
</reference>
<reference key="4">
    <citation type="journal article" date="2001" name="Appl. Microbiol. Biotechnol.">
        <title>Biotechnology and genetics of ergot alkaloids.</title>
        <authorList>
            <person name="Tudzynski P."/>
            <person name="Correia T."/>
            <person name="Keller U."/>
        </authorList>
    </citation>
    <scope>BIOTECHNOLOGY</scope>
    <source>
        <strain>P1 / 1029/N5</strain>
    </source>
</reference>
<reference key="5">
    <citation type="journal article" date="2003" name="Chem. Biol.">
        <title>Molecular cloning and analysis of the ergopeptine assembly system in the ergot fungus Claviceps purpurea.</title>
        <authorList>
            <person name="Correia T."/>
            <person name="Grammel N."/>
            <person name="Ortel I."/>
            <person name="Keller U."/>
            <person name="Tudzynski P."/>
        </authorList>
    </citation>
    <scope>FUNCTION</scope>
</reference>
<reference key="6">
    <citation type="journal article" date="2004" name="Fungal Genet. Biol.">
        <title>The determinant step in ergot alkaloid biosynthesis by an endophyte of perennial ryegrass.</title>
        <authorList>
            <person name="Wang J."/>
            <person name="Machado C."/>
            <person name="Panaccione D.G."/>
            <person name="Tsai H.-F."/>
            <person name="Schardl C.L."/>
        </authorList>
    </citation>
    <scope>FUNCTION</scope>
    <source>
        <strain>ATCC 20102 / Farmitalia FI 32/17</strain>
    </source>
</reference>
<reference key="7">
    <citation type="journal article" date="2005" name="Phytochemistry">
        <title>The ergot alkaloid gene cluster in Claviceps purpurea: extension of the cluster sequence and intra species evolution.</title>
        <authorList>
            <person name="Haarmann T."/>
            <person name="Machado C."/>
            <person name="Lubbe Y."/>
            <person name="Correia T."/>
            <person name="Schardl C.L."/>
            <person name="Panaccione D.G."/>
            <person name="Tudzynski P."/>
        </authorList>
    </citation>
    <scope>FUNCTION</scope>
    <scope>IDENTIFICATION IN THE EAS CLUSTER</scope>
</reference>
<reference key="8">
    <citation type="journal article" date="2006" name="ChemBioChem">
        <title>Identification of the cytochrome P450 monooxygenase that bridges the clavine and ergoline alkaloid pathways.</title>
        <authorList>
            <person name="Haarmann T."/>
            <person name="Ortel I."/>
            <person name="Tudzynski P."/>
            <person name="Keller U."/>
        </authorList>
    </citation>
    <scope>FUNCTION</scope>
    <source>
        <strain>P1 / 1029/N5</strain>
    </source>
</reference>
<reference key="9">
    <citation type="journal article" date="2007" name="Appl. Environ. Microbiol.">
        <title>A complex ergovaline gene cluster in epichloe endophytes of grasses.</title>
        <authorList>
            <person name="Fleetwood D.J."/>
            <person name="Scott B."/>
            <person name="Lane G.A."/>
            <person name="Tanaka A."/>
            <person name="Johnson R.D."/>
        </authorList>
    </citation>
    <scope>FUNCTION</scope>
</reference>
<reference key="10">
    <citation type="journal article" date="2007" name="Appl. Environ. Microbiol.">
        <title>Comparison of ergot alkaloid biosynthesis gene clusters in Claviceps species indicates loss of late pathway steps in evolution of C. fusiformis.</title>
        <authorList>
            <person name="Lorenz N."/>
            <person name="Wilson E.V."/>
            <person name="Machado C."/>
            <person name="Schardl C.L."/>
            <person name="Tudzynski P."/>
        </authorList>
    </citation>
    <scope>FUNCTION</scope>
</reference>
<reference key="11">
    <citation type="journal article" date="2008" name="Fungal Genet. Biol.">
        <title>Use of a nonhomologous end joining deficient strain (Deltaku70) of the ergot fungus Claviceps purpurea for identification of a nonribosomal peptide synthetase gene involved in ergotamine biosynthesis.</title>
        <authorList>
            <person name="Haarmann T."/>
            <person name="Lorenz N."/>
            <person name="Tudzynski P."/>
        </authorList>
    </citation>
    <scope>FUNCTION</scope>
</reference>
<reference key="12">
    <citation type="journal article" date="2009" name="J. Biol. Chem.">
        <title>Combinatorial assembly of simple and complex D-lysergic acid alkaloid peptide classes in the ergot fungus Claviceps purpurea.</title>
        <authorList>
            <person name="Ortel I."/>
            <person name="Keller U."/>
        </authorList>
    </citation>
    <scope>FUNCTION</scope>
</reference>
<reference key="13">
    <citation type="journal article" date="2010" name="Appl. Environ. Microbiol.">
        <title>Alkaloid cluster gene ccsA of the ergot fungus Claviceps purpurea encodes chanoclavine I synthase, a flavin adenine dinucleotide-containing oxidoreductase mediating the transformation of N-methyl-dimethylallyltryptophan to chanoclavine I.</title>
        <authorList>
            <person name="Lorenz N."/>
            <person name="Olsovska J."/>
            <person name="Sulc M."/>
            <person name="Tudzynski P."/>
        </authorList>
    </citation>
    <scope>FUNCTION</scope>
</reference>
<reference key="14">
    <citation type="journal article" date="2010" name="J. Am. Chem. Soc.">
        <title>Controlling a structural branch point in ergot alkaloid biosynthesis.</title>
        <authorList>
            <person name="Cheng J.Z."/>
            <person name="Coyle C.M."/>
            <person name="Panaccione D.G."/>
            <person name="O'Connor S.E."/>
        </authorList>
    </citation>
    <scope>FUNCTION</scope>
    <source>
        <strain>ATCC 20102 / Farmitalia FI 32/17</strain>
    </source>
</reference>
<reference key="15">
    <citation type="journal article" date="2011" name="Curr. Genet.">
        <title>Ergot cluster-encoded catalase is required for synthesis of chanoclavine-I in Aspergillus fumigatus.</title>
        <authorList>
            <person name="Goetz K.E."/>
            <person name="Coyle C.M."/>
            <person name="Cheng J.Z."/>
            <person name="O'Connor S.E."/>
            <person name="Panaccione D.G."/>
        </authorList>
    </citation>
    <scope>FUNCTION</scope>
</reference>
<reference key="16">
    <citation type="journal article" date="2011" name="Org. Biomol. Chem.">
        <title>New insights into ergot alkaloid biosynthesis in Claviceps purpurea: an agroclavine synthase EasG catalyses, via a non-enzymatic adduct with reduced glutathione, the conversion of chanoclavine-I aldehyde to agroclavine.</title>
        <authorList>
            <person name="Matuschek M."/>
            <person name="Wallwey C."/>
            <person name="Xie X."/>
            <person name="Li S.M."/>
        </authorList>
    </citation>
    <scope>FUNCTION</scope>
</reference>
<reference key="17">
    <citation type="journal article" date="2014" name="Chem. Biol.">
        <title>Cyclolization of D-lysergic acid alkaloid peptides.</title>
        <authorList>
            <person name="Havemann J."/>
            <person name="Vogel D."/>
            <person name="Loll B."/>
            <person name="Keller U."/>
        </authorList>
    </citation>
    <scope>FUNCTION</scope>
</reference>